<organism>
    <name type="scientific">Bos taurus</name>
    <name type="common">Bovine</name>
    <dbReference type="NCBI Taxonomy" id="9913"/>
    <lineage>
        <taxon>Eukaryota</taxon>
        <taxon>Metazoa</taxon>
        <taxon>Chordata</taxon>
        <taxon>Craniata</taxon>
        <taxon>Vertebrata</taxon>
        <taxon>Euteleostomi</taxon>
        <taxon>Mammalia</taxon>
        <taxon>Eutheria</taxon>
        <taxon>Laurasiatheria</taxon>
        <taxon>Artiodactyla</taxon>
        <taxon>Ruminantia</taxon>
        <taxon>Pecora</taxon>
        <taxon>Bovidae</taxon>
        <taxon>Bovinae</taxon>
        <taxon>Bos</taxon>
    </lineage>
</organism>
<sequence>MSETAPVAPAAPAPAEKTPVKKKAKKSGVAAGKRKASGPPVSELITKAVAASKERSGVSLAALKKALAAAGYDVEKNNSRIKLGLKSLVSKGTLVQTKGTGASGSFKLNKKAATGEAKPKGKKAGAAKPKKAAGAAKKPKKSTGAATPKKAAKKTPKKVKKPAAAAGTKKVAKSPKKAKAAKPKKPTKSPAKAKAPKPKAAKPKAAKPKATKAKKAVSKKK</sequence>
<comment type="function">
    <text evidence="1">H1 histones bind to linker DNA between nucleosomes forming the macromolecular structure known as the chromatin fiber. H1 histones are necessary for the condensation of nucleosome chains into higher-order structured fibers. Also acts as a regulator of individual gene transcription through chromatin remodeling, nucleosome spacing and DNA methylation (By similarity).</text>
</comment>
<comment type="subcellular location">
    <subcellularLocation>
        <location evidence="5">Nucleus</location>
    </subcellularLocation>
    <subcellularLocation>
        <location evidence="5">Chromosome</location>
    </subcellularLocation>
    <text evidence="1">Mainly localizes in euchromatin.</text>
</comment>
<comment type="domain">
    <text evidence="1">The C-terminal domain is required for high-affinity binding to chromatin.</text>
</comment>
<comment type="PTM">
    <text evidence="3">H1 histones are progressively phosphorylated during the cell cycle, becoming maximally phosphorylated during late G2 phase and M phase, and being dephosphorylated sharply thereafter.</text>
</comment>
<comment type="PTM">
    <text evidence="4">Citrullination at Arg-55 (H1R54ci) by PADI4 takes place within the DNA-binding site of H1 and results in its displacement from chromatin and global chromatin decondensation, thereby promoting pluripotency and stem cell maintenance.</text>
</comment>
<comment type="similarity">
    <text evidence="5">Belongs to the histone H1/H5 family.</text>
</comment>
<evidence type="ECO:0000250" key="1"/>
<evidence type="ECO:0000250" key="2">
    <source>
        <dbReference type="UniProtKB" id="P16402"/>
    </source>
</evidence>
<evidence type="ECO:0000250" key="3">
    <source>
        <dbReference type="UniProtKB" id="P43275"/>
    </source>
</evidence>
<evidence type="ECO:0000250" key="4">
    <source>
        <dbReference type="UniProtKB" id="P43277"/>
    </source>
</evidence>
<evidence type="ECO:0000255" key="5">
    <source>
        <dbReference type="PROSITE-ProRule" id="PRU00837"/>
    </source>
</evidence>
<evidence type="ECO:0000256" key="6">
    <source>
        <dbReference type="SAM" id="MobiDB-lite"/>
    </source>
</evidence>
<evidence type="ECO:0000269" key="7">
    <source>
    </source>
</evidence>
<keyword id="KW-0007">Acetylation</keyword>
<keyword id="KW-0158">Chromosome</keyword>
<keyword id="KW-0164">Citrullination</keyword>
<keyword id="KW-0238">DNA-binding</keyword>
<keyword id="KW-0379">Hydroxylation</keyword>
<keyword id="KW-0539">Nucleus</keyword>
<keyword id="KW-0597">Phosphoprotein</keyword>
<keyword id="KW-1185">Reference proteome</keyword>
<accession>A7MAZ5</accession>
<protein>
    <recommendedName>
        <fullName>Histone H1.3</fullName>
    </recommendedName>
</protein>
<proteinExistence type="evidence at protein level"/>
<feature type="initiator methionine" description="Removed" evidence="2">
    <location>
        <position position="1"/>
    </location>
</feature>
<feature type="chain" id="PRO_0000419136" description="Histone H1.3">
    <location>
        <begin position="2"/>
        <end position="221"/>
    </location>
</feature>
<feature type="domain" description="H15" evidence="5">
    <location>
        <begin position="37"/>
        <end position="110"/>
    </location>
</feature>
<feature type="region of interest" description="Disordered" evidence="6">
    <location>
        <begin position="1"/>
        <end position="42"/>
    </location>
</feature>
<feature type="region of interest" description="Disordered" evidence="6">
    <location>
        <begin position="87"/>
        <end position="221"/>
    </location>
</feature>
<feature type="compositionally biased region" description="Low complexity" evidence="6">
    <location>
        <begin position="1"/>
        <end position="17"/>
    </location>
</feature>
<feature type="compositionally biased region" description="Basic residues" evidence="6">
    <location>
        <begin position="20"/>
        <end position="36"/>
    </location>
</feature>
<feature type="compositionally biased region" description="Basic residues" evidence="6">
    <location>
        <begin position="120"/>
        <end position="141"/>
    </location>
</feature>
<feature type="compositionally biased region" description="Basic residues" evidence="6">
    <location>
        <begin position="150"/>
        <end position="161"/>
    </location>
</feature>
<feature type="compositionally biased region" description="Basic residues" evidence="6">
    <location>
        <begin position="170"/>
        <end position="187"/>
    </location>
</feature>
<feature type="compositionally biased region" description="Basic residues" evidence="6">
    <location>
        <begin position="194"/>
        <end position="221"/>
    </location>
</feature>
<feature type="modified residue" description="N-acetylserine" evidence="2">
    <location>
        <position position="2"/>
    </location>
</feature>
<feature type="modified residue" description="Phosphoserine" evidence="2">
    <location>
        <position position="2"/>
    </location>
</feature>
<feature type="modified residue" description="N6-acetyllysine" evidence="4">
    <location>
        <position position="17"/>
    </location>
</feature>
<feature type="modified residue" description="Phosphothreonine" evidence="2">
    <location>
        <position position="18"/>
    </location>
</feature>
<feature type="modified residue" description="N6-(beta-hydroxybutyryl)lysine" evidence="4">
    <location>
        <position position="35"/>
    </location>
</feature>
<feature type="modified residue" description="N6-(beta-hydroxybutyryl)lysine" evidence="4">
    <location>
        <position position="53"/>
    </location>
</feature>
<feature type="modified residue" description="Citrulline" evidence="4">
    <location>
        <position position="55"/>
    </location>
</feature>
<feature type="modified residue" description="N6-(beta-hydroxybutyryl)lysine" evidence="4">
    <location>
        <position position="65"/>
    </location>
</feature>
<feature type="modified residue" description="N6-(beta-hydroxybutyryl)lysine" evidence="4">
    <location>
        <position position="86"/>
    </location>
</feature>
<feature type="modified residue" description="N6-(beta-hydroxybutyryl)lysine" evidence="4">
    <location>
        <position position="91"/>
    </location>
</feature>
<feature type="modified residue" description="Phosphoserine; by PKC" evidence="7">
    <location>
        <position position="105"/>
    </location>
</feature>
<feature type="modified residue" description="N6-(beta-hydroxybutyryl)lysine" evidence="4">
    <location>
        <position position="107"/>
    </location>
</feature>
<gene>
    <name evidence="2" type="primary">H1-3</name>
</gene>
<dbReference type="EMBL" id="DAAA02055497">
    <property type="status" value="NOT_ANNOTATED_CDS"/>
    <property type="molecule type" value="Genomic_DNA"/>
</dbReference>
<dbReference type="EMBL" id="BC151257">
    <property type="protein sequence ID" value="AAI51258.1"/>
    <property type="molecule type" value="mRNA"/>
</dbReference>
<dbReference type="RefSeq" id="NP_001094536.1">
    <property type="nucleotide sequence ID" value="NM_001101066.1"/>
</dbReference>
<dbReference type="SMR" id="A7MAZ5"/>
<dbReference type="FunCoup" id="A7MAZ5">
    <property type="interactions" value="264"/>
</dbReference>
<dbReference type="STRING" id="9913.ENSBTAP00000054012"/>
<dbReference type="iPTMnet" id="A7MAZ5"/>
<dbReference type="PaxDb" id="9913-ENSBTAP00000051256"/>
<dbReference type="GeneID" id="509275"/>
<dbReference type="KEGG" id="bta:509275"/>
<dbReference type="CTD" id="3007"/>
<dbReference type="eggNOG" id="KOG4012">
    <property type="taxonomic scope" value="Eukaryota"/>
</dbReference>
<dbReference type="HOGENOM" id="CLU_052897_7_0_1"/>
<dbReference type="InParanoid" id="A7MAZ5"/>
<dbReference type="OrthoDB" id="9634976at2759"/>
<dbReference type="TreeFam" id="TF313664"/>
<dbReference type="Proteomes" id="UP000009136">
    <property type="component" value="Unplaced"/>
</dbReference>
<dbReference type="GO" id="GO:0000791">
    <property type="term" value="C:euchromatin"/>
    <property type="evidence" value="ECO:0000318"/>
    <property type="project" value="GO_Central"/>
</dbReference>
<dbReference type="GO" id="GO:0000786">
    <property type="term" value="C:nucleosome"/>
    <property type="evidence" value="ECO:0007669"/>
    <property type="project" value="InterPro"/>
</dbReference>
<dbReference type="GO" id="GO:0005634">
    <property type="term" value="C:nucleus"/>
    <property type="evidence" value="ECO:0000318"/>
    <property type="project" value="GO_Central"/>
</dbReference>
<dbReference type="GO" id="GO:0003690">
    <property type="term" value="F:double-stranded DNA binding"/>
    <property type="evidence" value="ECO:0000318"/>
    <property type="project" value="GO_Central"/>
</dbReference>
<dbReference type="GO" id="GO:0031492">
    <property type="term" value="F:nucleosomal DNA binding"/>
    <property type="evidence" value="ECO:0000318"/>
    <property type="project" value="GO_Central"/>
</dbReference>
<dbReference type="GO" id="GO:0030527">
    <property type="term" value="F:structural constituent of chromatin"/>
    <property type="evidence" value="ECO:0007669"/>
    <property type="project" value="InterPro"/>
</dbReference>
<dbReference type="GO" id="GO:0030261">
    <property type="term" value="P:chromosome condensation"/>
    <property type="evidence" value="ECO:0000318"/>
    <property type="project" value="GO_Central"/>
</dbReference>
<dbReference type="GO" id="GO:0045910">
    <property type="term" value="P:negative regulation of DNA recombination"/>
    <property type="evidence" value="ECO:0000318"/>
    <property type="project" value="GO_Central"/>
</dbReference>
<dbReference type="GO" id="GO:0006334">
    <property type="term" value="P:nucleosome assembly"/>
    <property type="evidence" value="ECO:0007669"/>
    <property type="project" value="InterPro"/>
</dbReference>
<dbReference type="CDD" id="cd00073">
    <property type="entry name" value="H15"/>
    <property type="match status" value="1"/>
</dbReference>
<dbReference type="FunFam" id="1.10.10.10:FF:000075">
    <property type="entry name" value="Histone H1 like"/>
    <property type="match status" value="1"/>
</dbReference>
<dbReference type="Gene3D" id="1.10.10.10">
    <property type="entry name" value="Winged helix-like DNA-binding domain superfamily/Winged helix DNA-binding domain"/>
    <property type="match status" value="1"/>
</dbReference>
<dbReference type="InterPro" id="IPR005819">
    <property type="entry name" value="H1/H5"/>
</dbReference>
<dbReference type="InterPro" id="IPR005818">
    <property type="entry name" value="Histone_H1/H5_H15"/>
</dbReference>
<dbReference type="InterPro" id="IPR036388">
    <property type="entry name" value="WH-like_DNA-bd_sf"/>
</dbReference>
<dbReference type="InterPro" id="IPR036390">
    <property type="entry name" value="WH_DNA-bd_sf"/>
</dbReference>
<dbReference type="Pfam" id="PF00538">
    <property type="entry name" value="Linker_histone"/>
    <property type="match status" value="1"/>
</dbReference>
<dbReference type="PRINTS" id="PR00624">
    <property type="entry name" value="HISTONEH5"/>
</dbReference>
<dbReference type="SMART" id="SM00526">
    <property type="entry name" value="H15"/>
    <property type="match status" value="1"/>
</dbReference>
<dbReference type="SUPFAM" id="SSF46785">
    <property type="entry name" value="Winged helix' DNA-binding domain"/>
    <property type="match status" value="1"/>
</dbReference>
<dbReference type="PROSITE" id="PS51504">
    <property type="entry name" value="H15"/>
    <property type="match status" value="1"/>
</dbReference>
<name>H13_BOVIN</name>
<reference key="1">
    <citation type="journal article" date="2009" name="Genome Biol.">
        <title>A whole-genome assembly of the domestic cow, Bos taurus.</title>
        <authorList>
            <person name="Zimin A.V."/>
            <person name="Delcher A.L."/>
            <person name="Florea L."/>
            <person name="Kelley D.R."/>
            <person name="Schatz M.C."/>
            <person name="Puiu D."/>
            <person name="Hanrahan F."/>
            <person name="Pertea G."/>
            <person name="Van Tassell C.P."/>
            <person name="Sonstegard T.S."/>
            <person name="Marcais G."/>
            <person name="Roberts M."/>
            <person name="Subramanian P."/>
            <person name="Yorke J.A."/>
            <person name="Salzberg S.L."/>
        </authorList>
    </citation>
    <scope>NUCLEOTIDE SEQUENCE [LARGE SCALE GENOMIC DNA]</scope>
    <source>
        <strain>Hereford</strain>
    </source>
</reference>
<reference key="2">
    <citation type="submission" date="2007-07" db="EMBL/GenBank/DDBJ databases">
        <authorList>
            <consortium name="NIH - Mammalian Gene Collection (MGC) project"/>
        </authorList>
    </citation>
    <scope>NUCLEOTIDE SEQUENCE [LARGE SCALE MRNA]</scope>
    <source>
        <strain>Hereford</strain>
        <tissue>Hypothalamus</tissue>
    </source>
</reference>
<reference key="3">
    <citation type="journal article" date="1988" name="FEBS Lett.">
        <title>Identification of the phosphoserine residue in histone H1 phosphorylated by protein kinase C.</title>
        <authorList>
            <person name="Jakes S."/>
            <person name="Hastings T.G."/>
            <person name="Reimann E.M."/>
            <person name="Schlender K.K."/>
        </authorList>
    </citation>
    <scope>PHOSPHORYLATION AT SER-105</scope>
</reference>